<sequence length="424" mass="47067">MVTCEAGIASVQQAIKDIADGNFVIVIDRESRENEGDLILAGEKVSAEKMAFLLSHTTGIVCASVTREQARVLDLPAMVQENQCAFKTAFTVSVDASSGITTGVSAADRTRTVQLLSDPTSISQSFVRPGHVFPLVSQPGGVVKRPGHTEASMDLMRLAGMYPCGIFAELVNADHSMMRQQQILDFAEQHGFTVITVDDLITYRWTFDSLVEHVSSARIPTKYGEFFIHVYKSIIDGTEHFALVKGDIREQESVPVRVHSECLTGDVLGSCRCDCGAQLDMAMRYIAEQGLGVIVYLRGQEGRGIGFGHKIQAYALQDLGYDTVEANLQLSFPIDAREYGVAAQILKDLRLTSVRLITHNPKKFFELQRLGIHILDRIVLPVIVSSENERYLRTKKDRMGHWLNFPVLNESEDEYETVERTSCC</sequence>
<accession>Q9PLJ5</accession>
<gene>
    <name evidence="1" type="primary">ribBA</name>
    <name type="synonym">ribA/B</name>
    <name type="ordered locus">TC_0104</name>
</gene>
<organism>
    <name type="scientific">Chlamydia muridarum (strain MoPn / Nigg)</name>
    <dbReference type="NCBI Taxonomy" id="243161"/>
    <lineage>
        <taxon>Bacteria</taxon>
        <taxon>Pseudomonadati</taxon>
        <taxon>Chlamydiota</taxon>
        <taxon>Chlamydiia</taxon>
        <taxon>Chlamydiales</taxon>
        <taxon>Chlamydiaceae</taxon>
        <taxon>Chlamydia/Chlamydophila group</taxon>
        <taxon>Chlamydia</taxon>
    </lineage>
</organism>
<comment type="function">
    <text evidence="1">Catalyzes the conversion of D-ribulose 5-phosphate to formate and 3,4-dihydroxy-2-butanone 4-phosphate.</text>
</comment>
<comment type="function">
    <text evidence="1">Catalyzes the conversion of GTP to 2,5-diamino-6-ribosylamino-4(3H)-pyrimidinone 5'-phosphate (DARP), formate and pyrophosphate.</text>
</comment>
<comment type="catalytic activity">
    <reaction evidence="1">
        <text>D-ribulose 5-phosphate = (2S)-2-hydroxy-3-oxobutyl phosphate + formate + H(+)</text>
        <dbReference type="Rhea" id="RHEA:18457"/>
        <dbReference type="ChEBI" id="CHEBI:15378"/>
        <dbReference type="ChEBI" id="CHEBI:15740"/>
        <dbReference type="ChEBI" id="CHEBI:58121"/>
        <dbReference type="ChEBI" id="CHEBI:58830"/>
        <dbReference type="EC" id="4.1.99.12"/>
    </reaction>
</comment>
<comment type="catalytic activity">
    <reaction evidence="1">
        <text>GTP + 4 H2O = 2,5-diamino-6-hydroxy-4-(5-phosphoribosylamino)-pyrimidine + formate + 2 phosphate + 3 H(+)</text>
        <dbReference type="Rhea" id="RHEA:23704"/>
        <dbReference type="ChEBI" id="CHEBI:15377"/>
        <dbReference type="ChEBI" id="CHEBI:15378"/>
        <dbReference type="ChEBI" id="CHEBI:15740"/>
        <dbReference type="ChEBI" id="CHEBI:37565"/>
        <dbReference type="ChEBI" id="CHEBI:43474"/>
        <dbReference type="ChEBI" id="CHEBI:58614"/>
        <dbReference type="EC" id="3.5.4.25"/>
    </reaction>
</comment>
<comment type="cofactor">
    <cofactor evidence="1">
        <name>Mg(2+)</name>
        <dbReference type="ChEBI" id="CHEBI:18420"/>
    </cofactor>
    <cofactor evidence="1">
        <name>Mn(2+)</name>
        <dbReference type="ChEBI" id="CHEBI:29035"/>
    </cofactor>
    <text evidence="1">Binds 2 divalent metal cations per subunit. Magnesium or manganese.</text>
</comment>
<comment type="cofactor">
    <cofactor evidence="1">
        <name>Zn(2+)</name>
        <dbReference type="ChEBI" id="CHEBI:29105"/>
    </cofactor>
    <text evidence="1">Binds 1 zinc ion per subunit.</text>
</comment>
<comment type="pathway">
    <text evidence="1">Cofactor biosynthesis; riboflavin biosynthesis; 2-hydroxy-3-oxobutyl phosphate from D-ribulose 5-phosphate: step 1/1.</text>
</comment>
<comment type="pathway">
    <text evidence="1">Cofactor biosynthesis; riboflavin biosynthesis; 5-amino-6-(D-ribitylamino)uracil from GTP: step 1/4.</text>
</comment>
<comment type="similarity">
    <text evidence="1">In the N-terminal section; belongs to the DHBP synthase family.</text>
</comment>
<comment type="similarity">
    <text evidence="1">In the C-terminal section; belongs to the GTP cyclohydrolase II family.</text>
</comment>
<feature type="chain" id="PRO_0000151723" description="Riboflavin biosynthesis protein RibBA">
    <location>
        <begin position="1"/>
        <end position="424"/>
    </location>
</feature>
<feature type="region of interest" description="DHBP synthase">
    <location>
        <begin position="1"/>
        <end position="206"/>
    </location>
</feature>
<feature type="region of interest" description="GTP cyclohydrolase II">
    <location>
        <begin position="207"/>
        <end position="424"/>
    </location>
</feature>
<feature type="active site" description="Proton acceptor; for GTP cyclohydrolase activity" evidence="1">
    <location>
        <position position="335"/>
    </location>
</feature>
<feature type="active site" description="Nucleophile; for GTP cyclohydrolase activity" evidence="1">
    <location>
        <position position="337"/>
    </location>
</feature>
<feature type="binding site" evidence="1">
    <location>
        <begin position="32"/>
        <end position="33"/>
    </location>
    <ligand>
        <name>D-ribulose 5-phosphate</name>
        <dbReference type="ChEBI" id="CHEBI:58121"/>
    </ligand>
</feature>
<feature type="binding site" evidence="1">
    <location>
        <position position="33"/>
    </location>
    <ligand>
        <name>Mg(2+)</name>
        <dbReference type="ChEBI" id="CHEBI:18420"/>
        <label>1</label>
    </ligand>
</feature>
<feature type="binding site" evidence="1">
    <location>
        <position position="33"/>
    </location>
    <ligand>
        <name>Mg(2+)</name>
        <dbReference type="ChEBI" id="CHEBI:18420"/>
        <label>2</label>
    </ligand>
</feature>
<feature type="binding site" evidence="1">
    <location>
        <position position="37"/>
    </location>
    <ligand>
        <name>D-ribulose 5-phosphate</name>
        <dbReference type="ChEBI" id="CHEBI:58121"/>
    </ligand>
</feature>
<feature type="binding site" evidence="1">
    <location>
        <begin position="145"/>
        <end position="149"/>
    </location>
    <ligand>
        <name>D-ribulose 5-phosphate</name>
        <dbReference type="ChEBI" id="CHEBI:58121"/>
    </ligand>
</feature>
<feature type="binding site" evidence="1">
    <location>
        <position position="148"/>
    </location>
    <ligand>
        <name>Mg(2+)</name>
        <dbReference type="ChEBI" id="CHEBI:18420"/>
        <label>2</label>
    </ligand>
</feature>
<feature type="binding site" evidence="1">
    <location>
        <position position="169"/>
    </location>
    <ligand>
        <name>D-ribulose 5-phosphate</name>
        <dbReference type="ChEBI" id="CHEBI:58121"/>
    </ligand>
</feature>
<feature type="binding site" evidence="1">
    <location>
        <begin position="257"/>
        <end position="261"/>
    </location>
    <ligand>
        <name>GTP</name>
        <dbReference type="ChEBI" id="CHEBI:37565"/>
    </ligand>
</feature>
<feature type="binding site" evidence="1">
    <location>
        <position position="262"/>
    </location>
    <ligand>
        <name>Zn(2+)</name>
        <dbReference type="ChEBI" id="CHEBI:29105"/>
        <note>catalytic</note>
    </ligand>
</feature>
<feature type="binding site" evidence="1">
    <location>
        <position position="273"/>
    </location>
    <ligand>
        <name>Zn(2+)</name>
        <dbReference type="ChEBI" id="CHEBI:29105"/>
        <note>catalytic</note>
    </ligand>
</feature>
<feature type="binding site" evidence="1">
    <location>
        <position position="275"/>
    </location>
    <ligand>
        <name>Zn(2+)</name>
        <dbReference type="ChEBI" id="CHEBI:29105"/>
        <note>catalytic</note>
    </ligand>
</feature>
<feature type="binding site" evidence="1">
    <location>
        <position position="278"/>
    </location>
    <ligand>
        <name>GTP</name>
        <dbReference type="ChEBI" id="CHEBI:37565"/>
    </ligand>
</feature>
<feature type="binding site" evidence="1">
    <location>
        <begin position="301"/>
        <end position="303"/>
    </location>
    <ligand>
        <name>GTP</name>
        <dbReference type="ChEBI" id="CHEBI:37565"/>
    </ligand>
</feature>
<feature type="binding site" evidence="1">
    <location>
        <position position="323"/>
    </location>
    <ligand>
        <name>GTP</name>
        <dbReference type="ChEBI" id="CHEBI:37565"/>
    </ligand>
</feature>
<feature type="binding site" evidence="1">
    <location>
        <position position="358"/>
    </location>
    <ligand>
        <name>GTP</name>
        <dbReference type="ChEBI" id="CHEBI:37565"/>
    </ligand>
</feature>
<feature type="binding site" evidence="1">
    <location>
        <position position="363"/>
    </location>
    <ligand>
        <name>GTP</name>
        <dbReference type="ChEBI" id="CHEBI:37565"/>
    </ligand>
</feature>
<feature type="site" description="Essential for DHBP synthase activity" evidence="1">
    <location>
        <position position="131"/>
    </location>
</feature>
<feature type="site" description="Essential for DHBP synthase activity" evidence="1">
    <location>
        <position position="169"/>
    </location>
</feature>
<keyword id="KW-0342">GTP-binding</keyword>
<keyword id="KW-0378">Hydrolase</keyword>
<keyword id="KW-0456">Lyase</keyword>
<keyword id="KW-0460">Magnesium</keyword>
<keyword id="KW-0464">Manganese</keyword>
<keyword id="KW-0479">Metal-binding</keyword>
<keyword id="KW-0511">Multifunctional enzyme</keyword>
<keyword id="KW-0547">Nucleotide-binding</keyword>
<keyword id="KW-0686">Riboflavin biosynthesis</keyword>
<keyword id="KW-0862">Zinc</keyword>
<dbReference type="EC" id="4.1.99.12" evidence="1"/>
<dbReference type="EC" id="3.5.4.25" evidence="1"/>
<dbReference type="EMBL" id="AE002160">
    <property type="protein sequence ID" value="AAF38984.1"/>
    <property type="molecule type" value="Genomic_DNA"/>
</dbReference>
<dbReference type="PIR" id="B81740">
    <property type="entry name" value="B81740"/>
</dbReference>
<dbReference type="RefSeq" id="WP_010229383.1">
    <property type="nucleotide sequence ID" value="NZ_CP063055.1"/>
</dbReference>
<dbReference type="SMR" id="Q9PLJ5"/>
<dbReference type="GeneID" id="1245634"/>
<dbReference type="KEGG" id="cmu:TC_0104"/>
<dbReference type="eggNOG" id="COG0108">
    <property type="taxonomic scope" value="Bacteria"/>
</dbReference>
<dbReference type="eggNOG" id="COG0807">
    <property type="taxonomic scope" value="Bacteria"/>
</dbReference>
<dbReference type="HOGENOM" id="CLU_020273_1_2_0"/>
<dbReference type="OrthoDB" id="9793111at2"/>
<dbReference type="UniPathway" id="UPA00275">
    <property type="reaction ID" value="UER00399"/>
</dbReference>
<dbReference type="UniPathway" id="UPA00275">
    <property type="reaction ID" value="UER00400"/>
</dbReference>
<dbReference type="Proteomes" id="UP000000800">
    <property type="component" value="Chromosome"/>
</dbReference>
<dbReference type="GO" id="GO:0005829">
    <property type="term" value="C:cytosol"/>
    <property type="evidence" value="ECO:0007669"/>
    <property type="project" value="TreeGrafter"/>
</dbReference>
<dbReference type="GO" id="GO:0008686">
    <property type="term" value="F:3,4-dihydroxy-2-butanone-4-phosphate synthase activity"/>
    <property type="evidence" value="ECO:0007669"/>
    <property type="project" value="UniProtKB-UniRule"/>
</dbReference>
<dbReference type="GO" id="GO:0005525">
    <property type="term" value="F:GTP binding"/>
    <property type="evidence" value="ECO:0007669"/>
    <property type="project" value="UniProtKB-KW"/>
</dbReference>
<dbReference type="GO" id="GO:0003935">
    <property type="term" value="F:GTP cyclohydrolase II activity"/>
    <property type="evidence" value="ECO:0007669"/>
    <property type="project" value="UniProtKB-UniRule"/>
</dbReference>
<dbReference type="GO" id="GO:0000287">
    <property type="term" value="F:magnesium ion binding"/>
    <property type="evidence" value="ECO:0007669"/>
    <property type="project" value="UniProtKB-UniRule"/>
</dbReference>
<dbReference type="GO" id="GO:0030145">
    <property type="term" value="F:manganese ion binding"/>
    <property type="evidence" value="ECO:0007669"/>
    <property type="project" value="UniProtKB-UniRule"/>
</dbReference>
<dbReference type="GO" id="GO:0008270">
    <property type="term" value="F:zinc ion binding"/>
    <property type="evidence" value="ECO:0007669"/>
    <property type="project" value="UniProtKB-UniRule"/>
</dbReference>
<dbReference type="GO" id="GO:0009231">
    <property type="term" value="P:riboflavin biosynthetic process"/>
    <property type="evidence" value="ECO:0007669"/>
    <property type="project" value="UniProtKB-UniRule"/>
</dbReference>
<dbReference type="CDD" id="cd00641">
    <property type="entry name" value="GTP_cyclohydro2"/>
    <property type="match status" value="1"/>
</dbReference>
<dbReference type="FunFam" id="3.40.50.10990:FF:000001">
    <property type="entry name" value="Riboflavin biosynthesis protein RibBA"/>
    <property type="match status" value="1"/>
</dbReference>
<dbReference type="FunFam" id="3.90.870.10:FF:000001">
    <property type="entry name" value="Riboflavin biosynthesis protein RibBA"/>
    <property type="match status" value="1"/>
</dbReference>
<dbReference type="Gene3D" id="3.90.870.10">
    <property type="entry name" value="DHBP synthase"/>
    <property type="match status" value="1"/>
</dbReference>
<dbReference type="Gene3D" id="3.40.50.10990">
    <property type="entry name" value="GTP cyclohydrolase II"/>
    <property type="match status" value="1"/>
</dbReference>
<dbReference type="HAMAP" id="MF_00179">
    <property type="entry name" value="RibA"/>
    <property type="match status" value="1"/>
</dbReference>
<dbReference type="HAMAP" id="MF_01283">
    <property type="entry name" value="RibBA"/>
    <property type="match status" value="1"/>
</dbReference>
<dbReference type="InterPro" id="IPR017945">
    <property type="entry name" value="DHBP_synth_RibB-like_a/b_dom"/>
</dbReference>
<dbReference type="InterPro" id="IPR000422">
    <property type="entry name" value="DHBP_synthase_RibB"/>
</dbReference>
<dbReference type="InterPro" id="IPR032677">
    <property type="entry name" value="GTP_cyclohydro_II"/>
</dbReference>
<dbReference type="InterPro" id="IPR000926">
    <property type="entry name" value="RibA"/>
</dbReference>
<dbReference type="InterPro" id="IPR036144">
    <property type="entry name" value="RibA-like_sf"/>
</dbReference>
<dbReference type="InterPro" id="IPR016299">
    <property type="entry name" value="Riboflavin_synth_RibBA"/>
</dbReference>
<dbReference type="NCBIfam" id="NF001591">
    <property type="entry name" value="PRK00393.1"/>
    <property type="match status" value="1"/>
</dbReference>
<dbReference type="NCBIfam" id="NF006803">
    <property type="entry name" value="PRK09311.1"/>
    <property type="match status" value="1"/>
</dbReference>
<dbReference type="NCBIfam" id="TIGR00505">
    <property type="entry name" value="ribA"/>
    <property type="match status" value="1"/>
</dbReference>
<dbReference type="NCBIfam" id="TIGR00506">
    <property type="entry name" value="ribB"/>
    <property type="match status" value="1"/>
</dbReference>
<dbReference type="PANTHER" id="PTHR21327:SF18">
    <property type="entry name" value="3,4-DIHYDROXY-2-BUTANONE 4-PHOSPHATE SYNTHASE"/>
    <property type="match status" value="1"/>
</dbReference>
<dbReference type="PANTHER" id="PTHR21327">
    <property type="entry name" value="GTP CYCLOHYDROLASE II-RELATED"/>
    <property type="match status" value="1"/>
</dbReference>
<dbReference type="Pfam" id="PF00926">
    <property type="entry name" value="DHBP_synthase"/>
    <property type="match status" value="1"/>
</dbReference>
<dbReference type="Pfam" id="PF00925">
    <property type="entry name" value="GTP_cyclohydro2"/>
    <property type="match status" value="1"/>
</dbReference>
<dbReference type="PIRSF" id="PIRSF001259">
    <property type="entry name" value="RibA"/>
    <property type="match status" value="1"/>
</dbReference>
<dbReference type="SUPFAM" id="SSF142695">
    <property type="entry name" value="RibA-like"/>
    <property type="match status" value="1"/>
</dbReference>
<dbReference type="SUPFAM" id="SSF55821">
    <property type="entry name" value="YrdC/RibB"/>
    <property type="match status" value="1"/>
</dbReference>
<protein>
    <recommendedName>
        <fullName evidence="1">Riboflavin biosynthesis protein RibBA</fullName>
    </recommendedName>
    <domain>
        <recommendedName>
            <fullName evidence="1">3,4-dihydroxy-2-butanone 4-phosphate synthase</fullName>
            <shortName evidence="1">DHBP synthase</shortName>
            <ecNumber evidence="1">4.1.99.12</ecNumber>
        </recommendedName>
    </domain>
    <domain>
        <recommendedName>
            <fullName evidence="1">GTP cyclohydrolase-2</fullName>
            <ecNumber evidence="1">3.5.4.25</ecNumber>
        </recommendedName>
        <alternativeName>
            <fullName evidence="1">GTP cyclohydrolase II</fullName>
        </alternativeName>
    </domain>
</protein>
<name>RIBBA_CHLMU</name>
<reference key="1">
    <citation type="journal article" date="2000" name="Nucleic Acids Res.">
        <title>Genome sequences of Chlamydia trachomatis MoPn and Chlamydia pneumoniae AR39.</title>
        <authorList>
            <person name="Read T.D."/>
            <person name="Brunham R.C."/>
            <person name="Shen C."/>
            <person name="Gill S.R."/>
            <person name="Heidelberg J.F."/>
            <person name="White O."/>
            <person name="Hickey E.K."/>
            <person name="Peterson J.D."/>
            <person name="Utterback T.R."/>
            <person name="Berry K.J."/>
            <person name="Bass S."/>
            <person name="Linher K.D."/>
            <person name="Weidman J.F."/>
            <person name="Khouri H.M."/>
            <person name="Craven B."/>
            <person name="Bowman C."/>
            <person name="Dodson R.J."/>
            <person name="Gwinn M.L."/>
            <person name="Nelson W.C."/>
            <person name="DeBoy R.T."/>
            <person name="Kolonay J.F."/>
            <person name="McClarty G."/>
            <person name="Salzberg S.L."/>
            <person name="Eisen J.A."/>
            <person name="Fraser C.M."/>
        </authorList>
    </citation>
    <scope>NUCLEOTIDE SEQUENCE [LARGE SCALE GENOMIC DNA]</scope>
    <source>
        <strain>MoPn / Nigg</strain>
    </source>
</reference>
<evidence type="ECO:0000255" key="1">
    <source>
        <dbReference type="HAMAP-Rule" id="MF_01283"/>
    </source>
</evidence>
<proteinExistence type="inferred from homology"/>